<gene>
    <name type="primary">rplA</name>
    <name type="ordered locus">DR_2045</name>
</gene>
<feature type="chain" id="PRO_0000125651" description="Large ribosomal subunit protein uL1">
    <location>
        <begin position="1"/>
        <end position="233"/>
    </location>
</feature>
<feature type="turn" evidence="3">
    <location>
        <begin position="9"/>
        <end position="11"/>
    </location>
</feature>
<feature type="strand" evidence="3">
    <location>
        <begin position="23"/>
        <end position="26"/>
    </location>
</feature>
<feature type="strand" evidence="3">
    <location>
        <begin position="29"/>
        <end position="32"/>
    </location>
</feature>
<feature type="strand" evidence="3">
    <location>
        <begin position="36"/>
        <end position="38"/>
    </location>
</feature>
<feature type="turn" evidence="3">
    <location>
        <begin position="85"/>
        <end position="91"/>
    </location>
</feature>
<feature type="helix" evidence="3">
    <location>
        <begin position="99"/>
        <end position="103"/>
    </location>
</feature>
<feature type="helix" evidence="3">
    <location>
        <begin position="122"/>
        <end position="126"/>
    </location>
</feature>
<feature type="turn" evidence="3">
    <location>
        <begin position="127"/>
        <end position="129"/>
    </location>
</feature>
<feature type="strand" evidence="3">
    <location>
        <begin position="130"/>
        <end position="132"/>
    </location>
</feature>
<feature type="helix" evidence="3">
    <location>
        <begin position="133"/>
        <end position="135"/>
    </location>
</feature>
<feature type="strand" evidence="3">
    <location>
        <begin position="141"/>
        <end position="144"/>
    </location>
</feature>
<feature type="strand" evidence="3">
    <location>
        <begin position="150"/>
        <end position="154"/>
    </location>
</feature>
<feature type="strand" evidence="3">
    <location>
        <begin position="157"/>
        <end position="160"/>
    </location>
</feature>
<feature type="strand" evidence="3">
    <location>
        <begin position="168"/>
        <end position="170"/>
    </location>
</feature>
<feature type="strand" evidence="3">
    <location>
        <begin position="179"/>
        <end position="181"/>
    </location>
</feature>
<feature type="strand" evidence="3">
    <location>
        <begin position="183"/>
        <end position="190"/>
    </location>
</feature>
<feature type="turn" evidence="3">
    <location>
        <begin position="191"/>
        <end position="193"/>
    </location>
</feature>
<feature type="strand" evidence="3">
    <location>
        <begin position="194"/>
        <end position="198"/>
    </location>
</feature>
<organism>
    <name type="scientific">Deinococcus radiodurans (strain ATCC 13939 / DSM 20539 / JCM 16871 / CCUG 27074 / LMG 4051 / NBRC 15346 / NCIMB 9279 / VKM B-1422 / R1)</name>
    <dbReference type="NCBI Taxonomy" id="243230"/>
    <lineage>
        <taxon>Bacteria</taxon>
        <taxon>Thermotogati</taxon>
        <taxon>Deinococcota</taxon>
        <taxon>Deinococci</taxon>
        <taxon>Deinococcales</taxon>
        <taxon>Deinococcaceae</taxon>
        <taxon>Deinococcus</taxon>
    </lineage>
</organism>
<evidence type="ECO:0000250" key="1"/>
<evidence type="ECO:0000305" key="2"/>
<evidence type="ECO:0007829" key="3">
    <source>
        <dbReference type="PDB" id="5DM6"/>
    </source>
</evidence>
<keyword id="KW-0002">3D-structure</keyword>
<keyword id="KW-1185">Reference proteome</keyword>
<keyword id="KW-0678">Repressor</keyword>
<keyword id="KW-0687">Ribonucleoprotein</keyword>
<keyword id="KW-0689">Ribosomal protein</keyword>
<keyword id="KW-0694">RNA-binding</keyword>
<keyword id="KW-0699">rRNA-binding</keyword>
<keyword id="KW-0810">Translation regulation</keyword>
<keyword id="KW-0820">tRNA-binding</keyword>
<sequence>MPKHGKRYRALEGKVDRNKQYSIDEAAALVKELATAKFDETVEVHFRLGIDPRKSDQNVRGTVALPHGTGRSVRVAVITKGENVQAAEAAGADVVGSDELIERIAGGFMDFDAVVATPDMMAQIGQKLARLLGPRGLLPNPKSGTVGADVAGMVRGLKAGRIEFRNDKTGVVHAPIGKASFESGNLSANYQALISALEGAKPGTAKGVFLRSAYLTTTMGPSIPLALGGAALA</sequence>
<comment type="function">
    <text>Binds directly to 23S rRNA. Forms the L1 stalk. Unlike the case in the Thermus thermophilus 70S ribosome, this protein is not seen to block the exit path of the E site tRNA. It is clear that the protein in the structure is flexible however, so this is probably due to its position in these crystals.</text>
</comment>
<comment type="function">
    <text evidence="1">Protein L1 is also a translational repressor protein, it controls the translation of the L11 operon by binding to its mRNA.</text>
</comment>
<comment type="subunit">
    <text evidence="1">Part of the 50S ribosomal subunit.</text>
</comment>
<comment type="similarity">
    <text evidence="2">Belongs to the universal ribosomal protein uL1 family.</text>
</comment>
<protein>
    <recommendedName>
        <fullName evidence="2">Large ribosomal subunit protein uL1</fullName>
    </recommendedName>
    <alternativeName>
        <fullName>50S ribosomal protein L1</fullName>
    </alternativeName>
</protein>
<proteinExistence type="evidence at protein level"/>
<dbReference type="EMBL" id="AE000513">
    <property type="protein sequence ID" value="AAF11592.1"/>
    <property type="molecule type" value="Genomic_DNA"/>
</dbReference>
<dbReference type="PIR" id="F75323">
    <property type="entry name" value="F75323"/>
</dbReference>
<dbReference type="RefSeq" id="NP_295768.1">
    <property type="nucleotide sequence ID" value="NC_001263.1"/>
</dbReference>
<dbReference type="RefSeq" id="WP_010888677.1">
    <property type="nucleotide sequence ID" value="NC_001263.1"/>
</dbReference>
<dbReference type="PDB" id="5DM6">
    <property type="method" value="X-ray"/>
    <property type="resolution" value="2.90 A"/>
    <property type="chains" value="0=6-229"/>
</dbReference>
<dbReference type="PDB" id="5DM7">
    <property type="method" value="X-ray"/>
    <property type="resolution" value="3.00 A"/>
    <property type="chains" value="0=6-229"/>
</dbReference>
<dbReference type="PDBsum" id="5DM6"/>
<dbReference type="PDBsum" id="5DM7"/>
<dbReference type="SMR" id="Q9RSS8"/>
<dbReference type="FunCoup" id="Q9RSS8">
    <property type="interactions" value="520"/>
</dbReference>
<dbReference type="STRING" id="243230.DR_2045"/>
<dbReference type="PaxDb" id="243230-DR_2045"/>
<dbReference type="EnsemblBacteria" id="AAF11592">
    <property type="protein sequence ID" value="AAF11592"/>
    <property type="gene ID" value="DR_2045"/>
</dbReference>
<dbReference type="GeneID" id="69518284"/>
<dbReference type="KEGG" id="dra:DR_2045"/>
<dbReference type="PATRIC" id="fig|243230.17.peg.2272"/>
<dbReference type="eggNOG" id="COG0081">
    <property type="taxonomic scope" value="Bacteria"/>
</dbReference>
<dbReference type="HOGENOM" id="CLU_062853_0_0_0"/>
<dbReference type="InParanoid" id="Q9RSS8"/>
<dbReference type="OrthoDB" id="9803740at2"/>
<dbReference type="Proteomes" id="UP000002524">
    <property type="component" value="Chromosome 1"/>
</dbReference>
<dbReference type="GO" id="GO:0015934">
    <property type="term" value="C:large ribosomal subunit"/>
    <property type="evidence" value="ECO:0007669"/>
    <property type="project" value="InterPro"/>
</dbReference>
<dbReference type="GO" id="GO:0019843">
    <property type="term" value="F:rRNA binding"/>
    <property type="evidence" value="ECO:0007669"/>
    <property type="project" value="UniProtKB-UniRule"/>
</dbReference>
<dbReference type="GO" id="GO:0003735">
    <property type="term" value="F:structural constituent of ribosome"/>
    <property type="evidence" value="ECO:0007669"/>
    <property type="project" value="InterPro"/>
</dbReference>
<dbReference type="GO" id="GO:0000049">
    <property type="term" value="F:tRNA binding"/>
    <property type="evidence" value="ECO:0007669"/>
    <property type="project" value="UniProtKB-KW"/>
</dbReference>
<dbReference type="GO" id="GO:0006417">
    <property type="term" value="P:regulation of translation"/>
    <property type="evidence" value="ECO:0007669"/>
    <property type="project" value="UniProtKB-KW"/>
</dbReference>
<dbReference type="GO" id="GO:0006412">
    <property type="term" value="P:translation"/>
    <property type="evidence" value="ECO:0007669"/>
    <property type="project" value="UniProtKB-UniRule"/>
</dbReference>
<dbReference type="CDD" id="cd00403">
    <property type="entry name" value="Ribosomal_L1"/>
    <property type="match status" value="1"/>
</dbReference>
<dbReference type="FunFam" id="3.40.50.790:FF:000001">
    <property type="entry name" value="50S ribosomal protein L1"/>
    <property type="match status" value="1"/>
</dbReference>
<dbReference type="Gene3D" id="3.30.190.20">
    <property type="match status" value="1"/>
</dbReference>
<dbReference type="Gene3D" id="3.40.50.790">
    <property type="match status" value="1"/>
</dbReference>
<dbReference type="HAMAP" id="MF_01318_B">
    <property type="entry name" value="Ribosomal_uL1_B"/>
    <property type="match status" value="1"/>
</dbReference>
<dbReference type="InterPro" id="IPR005878">
    <property type="entry name" value="Ribosom_uL1_bac-type"/>
</dbReference>
<dbReference type="InterPro" id="IPR002143">
    <property type="entry name" value="Ribosomal_uL1"/>
</dbReference>
<dbReference type="InterPro" id="IPR023674">
    <property type="entry name" value="Ribosomal_uL1-like"/>
</dbReference>
<dbReference type="InterPro" id="IPR028364">
    <property type="entry name" value="Ribosomal_uL1/biogenesis"/>
</dbReference>
<dbReference type="InterPro" id="IPR016095">
    <property type="entry name" value="Ribosomal_uL1_3-a/b-sand"/>
</dbReference>
<dbReference type="InterPro" id="IPR023673">
    <property type="entry name" value="Ribosomal_uL1_CS"/>
</dbReference>
<dbReference type="NCBIfam" id="TIGR01169">
    <property type="entry name" value="rplA_bact"/>
    <property type="match status" value="1"/>
</dbReference>
<dbReference type="PANTHER" id="PTHR36427">
    <property type="entry name" value="54S RIBOSOMAL PROTEIN L1, MITOCHONDRIAL"/>
    <property type="match status" value="1"/>
</dbReference>
<dbReference type="PANTHER" id="PTHR36427:SF3">
    <property type="entry name" value="LARGE RIBOSOMAL SUBUNIT PROTEIN UL1M"/>
    <property type="match status" value="1"/>
</dbReference>
<dbReference type="Pfam" id="PF00687">
    <property type="entry name" value="Ribosomal_L1"/>
    <property type="match status" value="1"/>
</dbReference>
<dbReference type="PIRSF" id="PIRSF002155">
    <property type="entry name" value="Ribosomal_L1"/>
    <property type="match status" value="1"/>
</dbReference>
<dbReference type="SUPFAM" id="SSF56808">
    <property type="entry name" value="Ribosomal protein L1"/>
    <property type="match status" value="1"/>
</dbReference>
<dbReference type="PROSITE" id="PS01199">
    <property type="entry name" value="RIBOSOMAL_L1"/>
    <property type="match status" value="1"/>
</dbReference>
<accession>Q9RSS8</accession>
<name>RL1_DEIRA</name>
<reference key="1">
    <citation type="journal article" date="1999" name="Science">
        <title>Genome sequence of the radioresistant bacterium Deinococcus radiodurans R1.</title>
        <authorList>
            <person name="White O."/>
            <person name="Eisen J.A."/>
            <person name="Heidelberg J.F."/>
            <person name="Hickey E.K."/>
            <person name="Peterson J.D."/>
            <person name="Dodson R.J."/>
            <person name="Haft D.H."/>
            <person name="Gwinn M.L."/>
            <person name="Nelson W.C."/>
            <person name="Richardson D.L."/>
            <person name="Moffat K.S."/>
            <person name="Qin H."/>
            <person name="Jiang L."/>
            <person name="Pamphile W."/>
            <person name="Crosby M."/>
            <person name="Shen M."/>
            <person name="Vamathevan J.J."/>
            <person name="Lam P."/>
            <person name="McDonald L.A."/>
            <person name="Utterback T.R."/>
            <person name="Zalewski C."/>
            <person name="Makarova K.S."/>
            <person name="Aravind L."/>
            <person name="Daly M.J."/>
            <person name="Minton K.W."/>
            <person name="Fleischmann R.D."/>
            <person name="Ketchum K.A."/>
            <person name="Nelson K.E."/>
            <person name="Salzberg S.L."/>
            <person name="Smith H.O."/>
            <person name="Venter J.C."/>
            <person name="Fraser C.M."/>
        </authorList>
    </citation>
    <scope>NUCLEOTIDE SEQUENCE [LARGE SCALE GENOMIC DNA]</scope>
    <source>
        <strain>ATCC 13939 / DSM 20539 / JCM 16871 / CCUG 27074 / LMG 4051 / NBRC 15346 / NCIMB 9279 / VKM B-1422 / R1</strain>
    </source>
</reference>
<reference key="2">
    <citation type="journal article" date="2001" name="Cell">
        <title>High resolution structure of the large ribosomal subunit from a mesophilic eubacterium.</title>
        <authorList>
            <person name="Harms J."/>
            <person name="Schluenzen F."/>
            <person name="Zarivach R."/>
            <person name="Bashan A."/>
            <person name="Gat S."/>
            <person name="Agmon I."/>
            <person name="Bartels H."/>
            <person name="Franceschi F."/>
            <person name="Yonath A."/>
        </authorList>
    </citation>
    <scope>STRUCTURE OF THE 50S SUBUNIT</scope>
    <source>
        <strain>ATCC 13939 / DSM 20539 / JCM 16871 / CCUG 27074 / LMG 4051 / NBRC 15346 / NCIMB 9279 / VKM B-1422 / R1</strain>
    </source>
</reference>